<reference key="1">
    <citation type="submission" date="2008-10" db="EMBL/GenBank/DDBJ databases">
        <title>Complete sequence of Desulfovibrio vulgaris str. 'Miyazaki F'.</title>
        <authorList>
            <person name="Lucas S."/>
            <person name="Copeland A."/>
            <person name="Lapidus A."/>
            <person name="Glavina del Rio T."/>
            <person name="Dalin E."/>
            <person name="Tice H."/>
            <person name="Bruce D."/>
            <person name="Goodwin L."/>
            <person name="Pitluck S."/>
            <person name="Sims D."/>
            <person name="Brettin T."/>
            <person name="Detter J.C."/>
            <person name="Han C."/>
            <person name="Larimer F."/>
            <person name="Land M."/>
            <person name="Hauser L."/>
            <person name="Kyrpides N."/>
            <person name="Mikhailova N."/>
            <person name="Hazen T.C."/>
            <person name="Richardson P."/>
        </authorList>
    </citation>
    <scope>NUCLEOTIDE SEQUENCE [LARGE SCALE GENOMIC DNA]</scope>
    <source>
        <strain>DSM 19637 / Miyazaki F</strain>
    </source>
</reference>
<keyword id="KW-0028">Amino-acid biosynthesis</keyword>
<keyword id="KW-0963">Cytoplasm</keyword>
<keyword id="KW-0368">Histidine biosynthesis</keyword>
<keyword id="KW-0413">Isomerase</keyword>
<accession>B8DNB4</accession>
<evidence type="ECO:0000255" key="1">
    <source>
        <dbReference type="HAMAP-Rule" id="MF_01014"/>
    </source>
</evidence>
<dbReference type="EC" id="5.3.1.16" evidence="1"/>
<dbReference type="EMBL" id="CP001197">
    <property type="protein sequence ID" value="ACL10056.1"/>
    <property type="molecule type" value="Genomic_DNA"/>
</dbReference>
<dbReference type="SMR" id="B8DNB4"/>
<dbReference type="STRING" id="883.DvMF_3120"/>
<dbReference type="KEGG" id="dvm:DvMF_3120"/>
<dbReference type="eggNOG" id="COG0106">
    <property type="taxonomic scope" value="Bacteria"/>
</dbReference>
<dbReference type="HOGENOM" id="CLU_048577_1_1_7"/>
<dbReference type="OrthoDB" id="9807749at2"/>
<dbReference type="UniPathway" id="UPA00031">
    <property type="reaction ID" value="UER00009"/>
</dbReference>
<dbReference type="GO" id="GO:0005737">
    <property type="term" value="C:cytoplasm"/>
    <property type="evidence" value="ECO:0007669"/>
    <property type="project" value="UniProtKB-SubCell"/>
</dbReference>
<dbReference type="GO" id="GO:0003949">
    <property type="term" value="F:1-(5-phosphoribosyl)-5-[(5-phosphoribosylamino)methylideneamino]imidazole-4-carboxamide isomerase activity"/>
    <property type="evidence" value="ECO:0007669"/>
    <property type="project" value="UniProtKB-UniRule"/>
</dbReference>
<dbReference type="GO" id="GO:0000105">
    <property type="term" value="P:L-histidine biosynthetic process"/>
    <property type="evidence" value="ECO:0007669"/>
    <property type="project" value="UniProtKB-UniRule"/>
</dbReference>
<dbReference type="GO" id="GO:0000162">
    <property type="term" value="P:L-tryptophan biosynthetic process"/>
    <property type="evidence" value="ECO:0007669"/>
    <property type="project" value="TreeGrafter"/>
</dbReference>
<dbReference type="CDD" id="cd04732">
    <property type="entry name" value="HisA"/>
    <property type="match status" value="1"/>
</dbReference>
<dbReference type="FunFam" id="3.20.20.70:FF:000009">
    <property type="entry name" value="1-(5-phosphoribosyl)-5-[(5-phosphoribosylamino)methylideneamino] imidazole-4-carboxamide isomerase"/>
    <property type="match status" value="1"/>
</dbReference>
<dbReference type="Gene3D" id="3.20.20.70">
    <property type="entry name" value="Aldolase class I"/>
    <property type="match status" value="1"/>
</dbReference>
<dbReference type="HAMAP" id="MF_01014">
    <property type="entry name" value="HisA"/>
    <property type="match status" value="1"/>
</dbReference>
<dbReference type="InterPro" id="IPR013785">
    <property type="entry name" value="Aldolase_TIM"/>
</dbReference>
<dbReference type="InterPro" id="IPR006062">
    <property type="entry name" value="His_biosynth"/>
</dbReference>
<dbReference type="InterPro" id="IPR006063">
    <property type="entry name" value="HisA_bact_arch"/>
</dbReference>
<dbReference type="InterPro" id="IPR044524">
    <property type="entry name" value="Isoase_HisA-like"/>
</dbReference>
<dbReference type="InterPro" id="IPR023016">
    <property type="entry name" value="Isoase_HisA-like_bact"/>
</dbReference>
<dbReference type="InterPro" id="IPR011060">
    <property type="entry name" value="RibuloseP-bd_barrel"/>
</dbReference>
<dbReference type="NCBIfam" id="TIGR00007">
    <property type="entry name" value="1-(5-phosphoribosyl)-5-[(5-phosphoribosylamino)methylideneamino]imidazole-4-carboxamide isomerase"/>
    <property type="match status" value="1"/>
</dbReference>
<dbReference type="PANTHER" id="PTHR43090">
    <property type="entry name" value="1-(5-PHOSPHORIBOSYL)-5-[(5-PHOSPHORIBOSYLAMINO)METHYLIDENEAMINO] IMIDAZOLE-4-CARBOXAMIDE ISOMERASE"/>
    <property type="match status" value="1"/>
</dbReference>
<dbReference type="PANTHER" id="PTHR43090:SF2">
    <property type="entry name" value="1-(5-PHOSPHORIBOSYL)-5-[(5-PHOSPHORIBOSYLAMINO)METHYLIDENEAMINO] IMIDAZOLE-4-CARBOXAMIDE ISOMERASE"/>
    <property type="match status" value="1"/>
</dbReference>
<dbReference type="Pfam" id="PF00977">
    <property type="entry name" value="His_biosynth"/>
    <property type="match status" value="1"/>
</dbReference>
<dbReference type="SUPFAM" id="SSF51366">
    <property type="entry name" value="Ribulose-phoshate binding barrel"/>
    <property type="match status" value="1"/>
</dbReference>
<protein>
    <recommendedName>
        <fullName evidence="1">1-(5-phosphoribosyl)-5-[(5-phosphoribosylamino)methylideneamino] imidazole-4-carboxamide isomerase</fullName>
        <ecNumber evidence="1">5.3.1.16</ecNumber>
    </recommendedName>
    <alternativeName>
        <fullName evidence="1">Phosphoribosylformimino-5-aminoimidazole carboxamide ribotide isomerase</fullName>
    </alternativeName>
</protein>
<proteinExistence type="inferred from homology"/>
<organism>
    <name type="scientific">Nitratidesulfovibrio vulgaris (strain DSM 19637 / Miyazaki F)</name>
    <name type="common">Desulfovibrio vulgaris</name>
    <dbReference type="NCBI Taxonomy" id="883"/>
    <lineage>
        <taxon>Bacteria</taxon>
        <taxon>Pseudomonadati</taxon>
        <taxon>Thermodesulfobacteriota</taxon>
        <taxon>Desulfovibrionia</taxon>
        <taxon>Desulfovibrionales</taxon>
        <taxon>Desulfovibrionaceae</taxon>
        <taxon>Nitratidesulfovibrio</taxon>
    </lineage>
</organism>
<gene>
    <name evidence="1" type="primary">hisA</name>
    <name type="ordered locus">DvMF_3120</name>
</gene>
<feature type="chain" id="PRO_1000135105" description="1-(5-phosphoribosyl)-5-[(5-phosphoribosylamino)methylideneamino] imidazole-4-carboxamide isomerase">
    <location>
        <begin position="1"/>
        <end position="243"/>
    </location>
</feature>
<feature type="active site" description="Proton acceptor" evidence="1">
    <location>
        <position position="8"/>
    </location>
</feature>
<feature type="active site" description="Proton donor" evidence="1">
    <location>
        <position position="129"/>
    </location>
</feature>
<sequence length="243" mass="25885">MILFPAVDIKDGRCVRLRQGRADAETVFSDDPAAMARHWQDQGAKWLHVIDLDGAFSGMPANFELIRRICADLSVPVQLGGGIRDEATAKAYLDAGVERLIIGTVALEEPDLYARLCATFPGRIGVSLDAEGGRLKTKGWVADSGLTVDDVLPRLLAAGTAFVIYTDIDRDGMQTGVNLSALERLAGMCPVPVIAAGGVATLEDVRALYPMTLTSSVEGAITGRAIYTGTLDLHAAMEWIAAQ</sequence>
<name>HIS4_NITV9</name>
<comment type="catalytic activity">
    <reaction evidence="1">
        <text>1-(5-phospho-beta-D-ribosyl)-5-[(5-phospho-beta-D-ribosylamino)methylideneamino]imidazole-4-carboxamide = 5-[(5-phospho-1-deoxy-D-ribulos-1-ylimino)methylamino]-1-(5-phospho-beta-D-ribosyl)imidazole-4-carboxamide</text>
        <dbReference type="Rhea" id="RHEA:15469"/>
        <dbReference type="ChEBI" id="CHEBI:58435"/>
        <dbReference type="ChEBI" id="CHEBI:58525"/>
        <dbReference type="EC" id="5.3.1.16"/>
    </reaction>
</comment>
<comment type="pathway">
    <text evidence="1">Amino-acid biosynthesis; L-histidine biosynthesis; L-histidine from 5-phospho-alpha-D-ribose 1-diphosphate: step 4/9.</text>
</comment>
<comment type="subcellular location">
    <subcellularLocation>
        <location evidence="1">Cytoplasm</location>
    </subcellularLocation>
</comment>
<comment type="similarity">
    <text evidence="1">Belongs to the HisA/HisF family.</text>
</comment>